<feature type="chain" id="PRO_0000283094" description="F-box/FBD/LRR-repeat protein At1g13570">
    <location>
        <begin position="1"/>
        <end position="416"/>
    </location>
</feature>
<feature type="domain" description="F-box" evidence="1">
    <location>
        <begin position="5"/>
        <end position="53"/>
    </location>
</feature>
<feature type="repeat" description="LRR 1">
    <location>
        <begin position="115"/>
        <end position="142"/>
    </location>
</feature>
<feature type="repeat" description="LRR 2">
    <location>
        <begin position="164"/>
        <end position="189"/>
    </location>
</feature>
<feature type="repeat" description="LRR 3">
    <location>
        <begin position="203"/>
        <end position="229"/>
    </location>
</feature>
<feature type="repeat" description="LRR 4">
    <location>
        <begin position="238"/>
        <end position="263"/>
    </location>
</feature>
<feature type="repeat" description="LRR 5">
    <location>
        <begin position="294"/>
        <end position="321"/>
    </location>
</feature>
<feature type="domain" description="FBD">
    <location>
        <begin position="346"/>
        <end position="384"/>
    </location>
</feature>
<feature type="sequence conflict" description="In Ref. 3; BAC43076." evidence="2" ref="3">
    <original>L</original>
    <variation>P</variation>
    <location>
        <position position="166"/>
    </location>
</feature>
<protein>
    <recommendedName>
        <fullName>F-box/FBD/LRR-repeat protein At1g13570</fullName>
    </recommendedName>
</protein>
<evidence type="ECO:0000255" key="1">
    <source>
        <dbReference type="PROSITE-ProRule" id="PRU00080"/>
    </source>
</evidence>
<evidence type="ECO:0000305" key="2"/>
<keyword id="KW-0433">Leucine-rich repeat</keyword>
<keyword id="KW-1185">Reference proteome</keyword>
<keyword id="KW-0677">Repeat</keyword>
<proteinExistence type="evidence at transcript level"/>
<reference key="1">
    <citation type="journal article" date="2000" name="Nature">
        <title>Sequence and analysis of chromosome 1 of the plant Arabidopsis thaliana.</title>
        <authorList>
            <person name="Theologis A."/>
            <person name="Ecker J.R."/>
            <person name="Palm C.J."/>
            <person name="Federspiel N.A."/>
            <person name="Kaul S."/>
            <person name="White O."/>
            <person name="Alonso J."/>
            <person name="Altafi H."/>
            <person name="Araujo R."/>
            <person name="Bowman C.L."/>
            <person name="Brooks S.Y."/>
            <person name="Buehler E."/>
            <person name="Chan A."/>
            <person name="Chao Q."/>
            <person name="Chen H."/>
            <person name="Cheuk R.F."/>
            <person name="Chin C.W."/>
            <person name="Chung M.K."/>
            <person name="Conn L."/>
            <person name="Conway A.B."/>
            <person name="Conway A.R."/>
            <person name="Creasy T.H."/>
            <person name="Dewar K."/>
            <person name="Dunn P."/>
            <person name="Etgu P."/>
            <person name="Feldblyum T.V."/>
            <person name="Feng J.-D."/>
            <person name="Fong B."/>
            <person name="Fujii C.Y."/>
            <person name="Gill J.E."/>
            <person name="Goldsmith A.D."/>
            <person name="Haas B."/>
            <person name="Hansen N.F."/>
            <person name="Hughes B."/>
            <person name="Huizar L."/>
            <person name="Hunter J.L."/>
            <person name="Jenkins J."/>
            <person name="Johnson-Hopson C."/>
            <person name="Khan S."/>
            <person name="Khaykin E."/>
            <person name="Kim C.J."/>
            <person name="Koo H.L."/>
            <person name="Kremenetskaia I."/>
            <person name="Kurtz D.B."/>
            <person name="Kwan A."/>
            <person name="Lam B."/>
            <person name="Langin-Hooper S."/>
            <person name="Lee A."/>
            <person name="Lee J.M."/>
            <person name="Lenz C.A."/>
            <person name="Li J.H."/>
            <person name="Li Y.-P."/>
            <person name="Lin X."/>
            <person name="Liu S.X."/>
            <person name="Liu Z.A."/>
            <person name="Luros J.S."/>
            <person name="Maiti R."/>
            <person name="Marziali A."/>
            <person name="Militscher J."/>
            <person name="Miranda M."/>
            <person name="Nguyen M."/>
            <person name="Nierman W.C."/>
            <person name="Osborne B.I."/>
            <person name="Pai G."/>
            <person name="Peterson J."/>
            <person name="Pham P.K."/>
            <person name="Rizzo M."/>
            <person name="Rooney T."/>
            <person name="Rowley D."/>
            <person name="Sakano H."/>
            <person name="Salzberg S.L."/>
            <person name="Schwartz J.R."/>
            <person name="Shinn P."/>
            <person name="Southwick A.M."/>
            <person name="Sun H."/>
            <person name="Tallon L.J."/>
            <person name="Tambunga G."/>
            <person name="Toriumi M.J."/>
            <person name="Town C.D."/>
            <person name="Utterback T."/>
            <person name="Van Aken S."/>
            <person name="Vaysberg M."/>
            <person name="Vysotskaia V.S."/>
            <person name="Walker M."/>
            <person name="Wu D."/>
            <person name="Yu G."/>
            <person name="Fraser C.M."/>
            <person name="Venter J.C."/>
            <person name="Davis R.W."/>
        </authorList>
    </citation>
    <scope>NUCLEOTIDE SEQUENCE [LARGE SCALE GENOMIC DNA]</scope>
    <source>
        <strain>cv. Columbia</strain>
    </source>
</reference>
<reference key="2">
    <citation type="journal article" date="2017" name="Plant J.">
        <title>Araport11: a complete reannotation of the Arabidopsis thaliana reference genome.</title>
        <authorList>
            <person name="Cheng C.Y."/>
            <person name="Krishnakumar V."/>
            <person name="Chan A.P."/>
            <person name="Thibaud-Nissen F."/>
            <person name="Schobel S."/>
            <person name="Town C.D."/>
        </authorList>
    </citation>
    <scope>GENOME REANNOTATION</scope>
    <source>
        <strain>cv. Columbia</strain>
    </source>
</reference>
<reference key="3">
    <citation type="journal article" date="2002" name="Science">
        <title>Functional annotation of a full-length Arabidopsis cDNA collection.</title>
        <authorList>
            <person name="Seki M."/>
            <person name="Narusaka M."/>
            <person name="Kamiya A."/>
            <person name="Ishida J."/>
            <person name="Satou M."/>
            <person name="Sakurai T."/>
            <person name="Nakajima M."/>
            <person name="Enju A."/>
            <person name="Akiyama K."/>
            <person name="Oono Y."/>
            <person name="Muramatsu M."/>
            <person name="Hayashizaki Y."/>
            <person name="Kawai J."/>
            <person name="Carninci P."/>
            <person name="Itoh M."/>
            <person name="Ishii Y."/>
            <person name="Arakawa T."/>
            <person name="Shibata K."/>
            <person name="Shinagawa A."/>
            <person name="Shinozaki K."/>
        </authorList>
    </citation>
    <scope>NUCLEOTIDE SEQUENCE [LARGE SCALE MRNA]</scope>
    <source>
        <strain>cv. Columbia</strain>
    </source>
</reference>
<reference key="4">
    <citation type="submission" date="2006-08" db="EMBL/GenBank/DDBJ databases">
        <title>Arabidopsis ORF clones.</title>
        <authorList>
            <person name="Quinitio C."/>
            <person name="Chen H."/>
            <person name="Kim C.J."/>
            <person name="Shinn P."/>
            <person name="Ecker J.R."/>
        </authorList>
    </citation>
    <scope>NUCLEOTIDE SEQUENCE [LARGE SCALE MRNA]</scope>
    <source>
        <strain>cv. Columbia</strain>
    </source>
</reference>
<gene>
    <name type="ordered locus">At1g13570</name>
    <name type="ORF">F13B4.6</name>
</gene>
<name>FDL1_ARATH</name>
<dbReference type="EMBL" id="AC027134">
    <property type="protein sequence ID" value="AAF99824.1"/>
    <property type="molecule type" value="Genomic_DNA"/>
</dbReference>
<dbReference type="EMBL" id="CP002684">
    <property type="protein sequence ID" value="AEE29035.1"/>
    <property type="molecule type" value="Genomic_DNA"/>
</dbReference>
<dbReference type="EMBL" id="CP002684">
    <property type="protein sequence ID" value="ANM59319.1"/>
    <property type="molecule type" value="Genomic_DNA"/>
</dbReference>
<dbReference type="EMBL" id="AK118468">
    <property type="protein sequence ID" value="BAC43076.2"/>
    <property type="molecule type" value="mRNA"/>
</dbReference>
<dbReference type="EMBL" id="BT026442">
    <property type="protein sequence ID" value="ABH04549.1"/>
    <property type="molecule type" value="mRNA"/>
</dbReference>
<dbReference type="PIR" id="G86268">
    <property type="entry name" value="G86268"/>
</dbReference>
<dbReference type="RefSeq" id="NP_001321685.1">
    <property type="nucleotide sequence ID" value="NM_001332072.1"/>
</dbReference>
<dbReference type="RefSeq" id="NP_172814.1">
    <property type="nucleotide sequence ID" value="NM_101227.3"/>
</dbReference>
<dbReference type="BioGRID" id="23158">
    <property type="interactions" value="10"/>
</dbReference>
<dbReference type="FunCoup" id="Q9FZ70">
    <property type="interactions" value="1022"/>
</dbReference>
<dbReference type="STRING" id="3702.Q9FZ70"/>
<dbReference type="iPTMnet" id="Q9FZ70"/>
<dbReference type="PaxDb" id="3702-AT1G13570.1"/>
<dbReference type="ProteomicsDB" id="230771"/>
<dbReference type="EnsemblPlants" id="AT1G13570.1">
    <property type="protein sequence ID" value="AT1G13570.1"/>
    <property type="gene ID" value="AT1G13570"/>
</dbReference>
<dbReference type="EnsemblPlants" id="AT1G13570.3">
    <property type="protein sequence ID" value="AT1G13570.3"/>
    <property type="gene ID" value="AT1G13570"/>
</dbReference>
<dbReference type="GeneID" id="837918"/>
<dbReference type="Gramene" id="AT1G13570.1">
    <property type="protein sequence ID" value="AT1G13570.1"/>
    <property type="gene ID" value="AT1G13570"/>
</dbReference>
<dbReference type="Gramene" id="AT1G13570.3">
    <property type="protein sequence ID" value="AT1G13570.3"/>
    <property type="gene ID" value="AT1G13570"/>
</dbReference>
<dbReference type="KEGG" id="ath:AT1G13570"/>
<dbReference type="Araport" id="AT1G13570"/>
<dbReference type="TAIR" id="AT1G13570"/>
<dbReference type="eggNOG" id="ENOG502RQPH">
    <property type="taxonomic scope" value="Eukaryota"/>
</dbReference>
<dbReference type="HOGENOM" id="CLU_010721_0_1_1"/>
<dbReference type="InParanoid" id="Q9FZ70"/>
<dbReference type="OMA" id="HQNIRIC"/>
<dbReference type="PhylomeDB" id="Q9FZ70"/>
<dbReference type="PRO" id="PR:Q9FZ70"/>
<dbReference type="Proteomes" id="UP000006548">
    <property type="component" value="Chromosome 1"/>
</dbReference>
<dbReference type="ExpressionAtlas" id="Q9FZ70">
    <property type="expression patterns" value="baseline and differential"/>
</dbReference>
<dbReference type="CDD" id="cd22160">
    <property type="entry name" value="F-box_AtFBL13-like"/>
    <property type="match status" value="1"/>
</dbReference>
<dbReference type="Gene3D" id="1.20.1280.50">
    <property type="match status" value="1"/>
</dbReference>
<dbReference type="Gene3D" id="3.80.10.10">
    <property type="entry name" value="Ribonuclease Inhibitor"/>
    <property type="match status" value="1"/>
</dbReference>
<dbReference type="InterPro" id="IPR036047">
    <property type="entry name" value="F-box-like_dom_sf"/>
</dbReference>
<dbReference type="InterPro" id="IPR053781">
    <property type="entry name" value="F-box_AtFBL13-like"/>
</dbReference>
<dbReference type="InterPro" id="IPR001810">
    <property type="entry name" value="F-box_dom"/>
</dbReference>
<dbReference type="InterPro" id="IPR006566">
    <property type="entry name" value="FBD"/>
</dbReference>
<dbReference type="InterPro" id="IPR032675">
    <property type="entry name" value="LRR_dom_sf"/>
</dbReference>
<dbReference type="InterPro" id="IPR055411">
    <property type="entry name" value="LRR_FXL15/At3g58940/PEG3-like"/>
</dbReference>
<dbReference type="PANTHER" id="PTHR31639:SF237">
    <property type="entry name" value="F-BOX DOMAIN-CONTAINING PROTEIN"/>
    <property type="match status" value="1"/>
</dbReference>
<dbReference type="PANTHER" id="PTHR31639">
    <property type="entry name" value="F-BOX PROTEIN-LIKE"/>
    <property type="match status" value="1"/>
</dbReference>
<dbReference type="Pfam" id="PF00646">
    <property type="entry name" value="F-box"/>
    <property type="match status" value="1"/>
</dbReference>
<dbReference type="Pfam" id="PF08387">
    <property type="entry name" value="FBD"/>
    <property type="match status" value="1"/>
</dbReference>
<dbReference type="Pfam" id="PF24758">
    <property type="entry name" value="LRR_At5g56370"/>
    <property type="match status" value="1"/>
</dbReference>
<dbReference type="SMART" id="SM00579">
    <property type="entry name" value="FBD"/>
    <property type="match status" value="1"/>
</dbReference>
<dbReference type="SUPFAM" id="SSF81383">
    <property type="entry name" value="F-box domain"/>
    <property type="match status" value="1"/>
</dbReference>
<dbReference type="SUPFAM" id="SSF52047">
    <property type="entry name" value="RNI-like"/>
    <property type="match status" value="1"/>
</dbReference>
<dbReference type="PROSITE" id="PS50181">
    <property type="entry name" value="FBOX"/>
    <property type="match status" value="1"/>
</dbReference>
<organism>
    <name type="scientific">Arabidopsis thaliana</name>
    <name type="common">Mouse-ear cress</name>
    <dbReference type="NCBI Taxonomy" id="3702"/>
    <lineage>
        <taxon>Eukaryota</taxon>
        <taxon>Viridiplantae</taxon>
        <taxon>Streptophyta</taxon>
        <taxon>Embryophyta</taxon>
        <taxon>Tracheophyta</taxon>
        <taxon>Spermatophyta</taxon>
        <taxon>Magnoliopsida</taxon>
        <taxon>eudicotyledons</taxon>
        <taxon>Gunneridae</taxon>
        <taxon>Pentapetalae</taxon>
        <taxon>rosids</taxon>
        <taxon>malvids</taxon>
        <taxon>Brassicales</taxon>
        <taxon>Brassicaceae</taxon>
        <taxon>Camelineae</taxon>
        <taxon>Arabidopsis</taxon>
    </lineage>
</organism>
<accession>Q9FZ70</accession>
<accession>Q7FLD2</accession>
<sequence>MGESPDFISDLPQSIIENILTRLSIRDAIRTSVLSSKWRYKWSTLTDLVFDEKCVSPSNDRCVVETNLVRFITGVLLLHQGPIHKFQLSTSFKQCRPDIDQWLLFLSRNGIKELVLKLGEGEFRVPACLFNCLKLTCLELCHCEFDPPQYFKGFSYLKSLNLHQILVAPEVIESLISGCPLLEFLSLSYFDSLVLSISAPNLMYLYLDGEFKDIFLENTPKLVAISVSMYMHEDVTDFEQSSDYNLVKFLGGVPLLEKLVGYIYFTKYLSIGDDPGRLPLTYIHLKTIELYQVCFEDADEVLVLLRLVTHSPNLKELKVSASPVQPFPLEEEGFDLFERDYFDYKLPSLESVKITDASGIRYELEFIRFLLGTSPVLETVTVSSSLSDKDAKMDMVIELLRYPRVSPRAQLLFLQD</sequence>